<organism>
    <name type="scientific">Caulobacter segnis (strain ATCC 21756 / DSM 7131 / JCM 7823 / NBRC 15250 / LMG 17158 / TK0059)</name>
    <name type="common">Mycoplana segnis</name>
    <dbReference type="NCBI Taxonomy" id="509190"/>
    <lineage>
        <taxon>Bacteria</taxon>
        <taxon>Pseudomonadati</taxon>
        <taxon>Pseudomonadota</taxon>
        <taxon>Alphaproteobacteria</taxon>
        <taxon>Caulobacterales</taxon>
        <taxon>Caulobacteraceae</taxon>
        <taxon>Caulobacter</taxon>
    </lineage>
</organism>
<dbReference type="EC" id="1.14.99.46" evidence="1"/>
<dbReference type="EMBL" id="CP002008">
    <property type="protein sequence ID" value="ADG10547.1"/>
    <property type="molecule type" value="Genomic_DNA"/>
</dbReference>
<dbReference type="RefSeq" id="WP_013079202.1">
    <property type="nucleotide sequence ID" value="NC_014100.1"/>
</dbReference>
<dbReference type="SMR" id="D5VGV4"/>
<dbReference type="STRING" id="509190.Cseg_2081"/>
<dbReference type="KEGG" id="cse:Cseg_2081"/>
<dbReference type="eggNOG" id="COG2141">
    <property type="taxonomic scope" value="Bacteria"/>
</dbReference>
<dbReference type="HOGENOM" id="CLU_027853_1_1_5"/>
<dbReference type="Proteomes" id="UP000002629">
    <property type="component" value="Chromosome"/>
</dbReference>
<dbReference type="GO" id="GO:0008726">
    <property type="term" value="F:alkanesulfonate monooxygenase activity"/>
    <property type="evidence" value="ECO:0007669"/>
    <property type="project" value="TreeGrafter"/>
</dbReference>
<dbReference type="GO" id="GO:0052614">
    <property type="term" value="F:uracil oxygenase activity"/>
    <property type="evidence" value="ECO:0007669"/>
    <property type="project" value="UniProtKB-EC"/>
</dbReference>
<dbReference type="GO" id="GO:0046306">
    <property type="term" value="P:alkanesulfonate catabolic process"/>
    <property type="evidence" value="ECO:0007669"/>
    <property type="project" value="TreeGrafter"/>
</dbReference>
<dbReference type="GO" id="GO:0019740">
    <property type="term" value="P:nitrogen utilization"/>
    <property type="evidence" value="ECO:0007669"/>
    <property type="project" value="UniProtKB-UniRule"/>
</dbReference>
<dbReference type="GO" id="GO:0006212">
    <property type="term" value="P:uracil catabolic process"/>
    <property type="evidence" value="ECO:0007669"/>
    <property type="project" value="UniProtKB-UniRule"/>
</dbReference>
<dbReference type="CDD" id="cd01094">
    <property type="entry name" value="Alkanesulfonate_monoxygenase"/>
    <property type="match status" value="1"/>
</dbReference>
<dbReference type="FunFam" id="3.20.20.30:FF:000003">
    <property type="entry name" value="Pyrimidine monooxygenase RutA"/>
    <property type="match status" value="1"/>
</dbReference>
<dbReference type="Gene3D" id="3.20.20.30">
    <property type="entry name" value="Luciferase-like domain"/>
    <property type="match status" value="1"/>
</dbReference>
<dbReference type="HAMAP" id="MF_01699">
    <property type="entry name" value="RutA"/>
    <property type="match status" value="1"/>
</dbReference>
<dbReference type="InterPro" id="IPR011251">
    <property type="entry name" value="Luciferase-like_dom"/>
</dbReference>
<dbReference type="InterPro" id="IPR036661">
    <property type="entry name" value="Luciferase-like_sf"/>
</dbReference>
<dbReference type="InterPro" id="IPR019914">
    <property type="entry name" value="Pyrimidine_monooxygenase_RutA"/>
</dbReference>
<dbReference type="InterPro" id="IPR050172">
    <property type="entry name" value="SsuD_RutA_monooxygenase"/>
</dbReference>
<dbReference type="NCBIfam" id="TIGR03612">
    <property type="entry name" value="RutA"/>
    <property type="match status" value="1"/>
</dbReference>
<dbReference type="PANTHER" id="PTHR42847">
    <property type="entry name" value="ALKANESULFONATE MONOOXYGENASE"/>
    <property type="match status" value="1"/>
</dbReference>
<dbReference type="PANTHER" id="PTHR42847:SF4">
    <property type="entry name" value="ALKANESULFONATE MONOOXYGENASE-RELATED"/>
    <property type="match status" value="1"/>
</dbReference>
<dbReference type="Pfam" id="PF00296">
    <property type="entry name" value="Bac_luciferase"/>
    <property type="match status" value="1"/>
</dbReference>
<dbReference type="SUPFAM" id="SSF51679">
    <property type="entry name" value="Bacterial luciferase-like"/>
    <property type="match status" value="1"/>
</dbReference>
<reference key="1">
    <citation type="journal article" date="2011" name="J. Bacteriol.">
        <title>Genome sequences of eight morphologically diverse alphaproteobacteria.</title>
        <authorList>
            <consortium name="US DOE Joint Genome Institute"/>
            <person name="Brown P.J."/>
            <person name="Kysela D.T."/>
            <person name="Buechlein A."/>
            <person name="Hemmerich C."/>
            <person name="Brun Y.V."/>
        </authorList>
    </citation>
    <scope>NUCLEOTIDE SEQUENCE [LARGE SCALE GENOMIC DNA]</scope>
    <source>
        <strain>ATCC 21756 / DSM 7131 / JCM 7823 / NBRC 15250 / LMG 17158 / TK0059</strain>
    </source>
</reference>
<accession>D5VGV4</accession>
<gene>
    <name evidence="1" type="primary">rutA</name>
    <name type="ordered locus">Cseg_2081</name>
</gene>
<comment type="function">
    <text evidence="1">Catalyzes the pyrimidine ring opening between N-3 and C-4 by an unusual flavin hydroperoxide-catalyzed mechanism, adding oxygen atoms in the process to yield ureidoacrylate peracid, that immediately reacts with FMN forming ureidoacrylate and FMN-N(5)-oxide. The FMN-N(5)-oxide reacts spontaneously with NADH to produce FMN. Requires the flavin reductase RutF to regenerate FMN in vivo.</text>
</comment>
<comment type="catalytic activity">
    <reaction evidence="1">
        <text>uracil + FMNH2 + NADH + O2 = (Z)-3-ureidoacrylate + FMN + NAD(+) + H2O + H(+)</text>
        <dbReference type="Rhea" id="RHEA:31587"/>
        <dbReference type="ChEBI" id="CHEBI:15377"/>
        <dbReference type="ChEBI" id="CHEBI:15378"/>
        <dbReference type="ChEBI" id="CHEBI:15379"/>
        <dbReference type="ChEBI" id="CHEBI:17568"/>
        <dbReference type="ChEBI" id="CHEBI:57540"/>
        <dbReference type="ChEBI" id="CHEBI:57618"/>
        <dbReference type="ChEBI" id="CHEBI:57945"/>
        <dbReference type="ChEBI" id="CHEBI:58210"/>
        <dbReference type="ChEBI" id="CHEBI:59891"/>
        <dbReference type="EC" id="1.14.99.46"/>
    </reaction>
</comment>
<comment type="catalytic activity">
    <reaction evidence="1">
        <text>thymine + FMNH2 + NADH + O2 = (Z)-2-methylureidoacrylate + FMN + NAD(+) + H2O + H(+)</text>
        <dbReference type="Rhea" id="RHEA:31599"/>
        <dbReference type="ChEBI" id="CHEBI:15377"/>
        <dbReference type="ChEBI" id="CHEBI:15378"/>
        <dbReference type="ChEBI" id="CHEBI:15379"/>
        <dbReference type="ChEBI" id="CHEBI:17821"/>
        <dbReference type="ChEBI" id="CHEBI:57540"/>
        <dbReference type="ChEBI" id="CHEBI:57618"/>
        <dbReference type="ChEBI" id="CHEBI:57945"/>
        <dbReference type="ChEBI" id="CHEBI:58210"/>
        <dbReference type="ChEBI" id="CHEBI:143783"/>
        <dbReference type="EC" id="1.14.99.46"/>
    </reaction>
</comment>
<comment type="similarity">
    <text evidence="1">Belongs to the NtaA/SnaA/DszA monooxygenase family. RutA subfamily.</text>
</comment>
<name>RUTA_CAUST</name>
<proteinExistence type="inferred from homology"/>
<sequence length="352" mass="38446">MQVGVFIPIGNNGWLISETSPQYMPSFELNKEITQKAETYGFDFALSMIKLRGFGGKTQFWEHNLESFTLMAGLAAVTSKIKIFATVATLTIPPAIVARMASTIDSIAPGRFGVNLVTGWQKAEYSQMGLWPGEAHYTDRYNYLAEYTTVLKDLLETGVSDFKGKYFTMDDCRVSPHPKETKLICAGSSDEGLAFTAQYADYSFALGKGTNTPTAFASVNKRLEAAAEKTGRDVQSFILFMIIADETDEKAMAKWQSYRDGADQEALAWLTQQAAPNAKAGATTNTQQLAAPESAVNLNMGTLVGSYESIAKMLDEIAAVPGTAGVLLVFDDFLRGVEDFGTRIQPLMKSRT</sequence>
<evidence type="ECO:0000255" key="1">
    <source>
        <dbReference type="HAMAP-Rule" id="MF_01699"/>
    </source>
</evidence>
<keyword id="KW-0285">Flavoprotein</keyword>
<keyword id="KW-0288">FMN</keyword>
<keyword id="KW-0503">Monooxygenase</keyword>
<keyword id="KW-0521">NADP</keyword>
<keyword id="KW-0560">Oxidoreductase</keyword>
<feature type="chain" id="PRO_0000402587" description="Pyrimidine monooxygenase RutA">
    <location>
        <begin position="1"/>
        <end position="352"/>
    </location>
</feature>
<feature type="binding site" evidence="1">
    <location>
        <begin position="49"/>
        <end position="50"/>
    </location>
    <ligand>
        <name>FMN</name>
        <dbReference type="ChEBI" id="CHEBI:58210"/>
    </ligand>
</feature>
<feature type="binding site" evidence="1">
    <location>
        <position position="115"/>
    </location>
    <ligand>
        <name>FMN</name>
        <dbReference type="ChEBI" id="CHEBI:58210"/>
    </ligand>
</feature>
<feature type="binding site" evidence="1">
    <location>
        <position position="124"/>
    </location>
    <ligand>
        <name>FMN</name>
        <dbReference type="ChEBI" id="CHEBI:58210"/>
    </ligand>
</feature>
<feature type="binding site" evidence="1">
    <location>
        <begin position="140"/>
        <end position="141"/>
    </location>
    <ligand>
        <name>FMN</name>
        <dbReference type="ChEBI" id="CHEBI:58210"/>
    </ligand>
</feature>
<feature type="binding site" evidence="1">
    <location>
        <position position="189"/>
    </location>
    <ligand>
        <name>FMN</name>
        <dbReference type="ChEBI" id="CHEBI:58210"/>
    </ligand>
</feature>
<protein>
    <recommendedName>
        <fullName evidence="1">Pyrimidine monooxygenase RutA</fullName>
        <ecNumber evidence="1">1.14.99.46</ecNumber>
    </recommendedName>
</protein>